<name>NPY6R_RABIT</name>
<protein>
    <recommendedName>
        <fullName>Neuropeptide Y receptor type 6</fullName>
        <shortName>NPY6-R</shortName>
    </recommendedName>
</protein>
<comment type="function">
    <text evidence="3">Receptor for neuropeptide Y and peptide YY. The activity of this receptor is mediated by G proteins that inhibit adenylate cyclase activity.</text>
</comment>
<comment type="subcellular location">
    <subcellularLocation>
        <location>Cell membrane</location>
        <topology>Multi-pass membrane protein</topology>
    </subcellularLocation>
</comment>
<comment type="tissue specificity">
    <text evidence="3">Expressed in hippocampus, striatum, hypothalamus, cerebellum, small intestine, colon and adrenal gland.</text>
</comment>
<comment type="similarity">
    <text evidence="2">Belongs to the G-protein coupled receptor 1 family.</text>
</comment>
<feature type="chain" id="PRO_0000069944" description="Neuropeptide Y receptor type 6">
    <location>
        <begin position="1"/>
        <end position="371"/>
    </location>
</feature>
<feature type="topological domain" description="Extracellular" evidence="1">
    <location>
        <begin position="1"/>
        <end position="31"/>
    </location>
</feature>
<feature type="transmembrane region" description="Helical; Name=1" evidence="1">
    <location>
        <begin position="32"/>
        <end position="52"/>
    </location>
</feature>
<feature type="topological domain" description="Cytoplasmic" evidence="1">
    <location>
        <begin position="53"/>
        <end position="72"/>
    </location>
</feature>
<feature type="transmembrane region" description="Helical; Name=2" evidence="1">
    <location>
        <begin position="73"/>
        <end position="93"/>
    </location>
</feature>
<feature type="topological domain" description="Extracellular" evidence="1">
    <location>
        <begin position="94"/>
        <end position="111"/>
    </location>
</feature>
<feature type="transmembrane region" description="Helical; Name=3" evidence="1">
    <location>
        <begin position="112"/>
        <end position="132"/>
    </location>
</feature>
<feature type="topological domain" description="Cytoplasmic" evidence="1">
    <location>
        <begin position="133"/>
        <end position="150"/>
    </location>
</feature>
<feature type="transmembrane region" description="Helical; Name=4" evidence="1">
    <location>
        <begin position="151"/>
        <end position="171"/>
    </location>
</feature>
<feature type="topological domain" description="Extracellular" evidence="1">
    <location>
        <begin position="172"/>
        <end position="213"/>
    </location>
</feature>
<feature type="transmembrane region" description="Helical; Name=5" evidence="1">
    <location>
        <begin position="214"/>
        <end position="234"/>
    </location>
</feature>
<feature type="topological domain" description="Cytoplasmic" evidence="1">
    <location>
        <begin position="235"/>
        <end position="263"/>
    </location>
</feature>
<feature type="transmembrane region" description="Helical; Name=6" evidence="1">
    <location>
        <begin position="264"/>
        <end position="284"/>
    </location>
</feature>
<feature type="topological domain" description="Extracellular" evidence="1">
    <location>
        <begin position="285"/>
        <end position="297"/>
    </location>
</feature>
<feature type="transmembrane region" description="Helical; Name=7" evidence="1">
    <location>
        <begin position="298"/>
        <end position="318"/>
    </location>
</feature>
<feature type="topological domain" description="Cytoplasmic" evidence="1">
    <location>
        <begin position="319"/>
        <end position="371"/>
    </location>
</feature>
<feature type="lipid moiety-binding region" description="S-palmitoyl cysteine" evidence="1">
    <location>
        <position position="336"/>
    </location>
</feature>
<feature type="glycosylation site" description="N-linked (GlcNAc...) asparagine" evidence="1">
    <location>
        <position position="11"/>
    </location>
</feature>
<feature type="glycosylation site" description="N-linked (GlcNAc...) asparagine" evidence="1">
    <location>
        <position position="18"/>
    </location>
</feature>
<feature type="glycosylation site" description="N-linked (GlcNAc...) asparagine" evidence="1">
    <location>
        <position position="182"/>
    </location>
</feature>
<feature type="disulfide bond" evidence="2">
    <location>
        <begin position="109"/>
        <end position="196"/>
    </location>
</feature>
<accession>P79217</accession>
<sequence>MEVSLNDPASNKTSAKSNSSAFFYFESCQSPSLALLLLLIAYTVVLIMGICGNLSLITIIFKKQREAQNVTNILIANLSLSDILVCVMCIPFTAIYTLMDRWIFGNTMCKLTSYVQSVSISVSIFSLVLIAIERYQLIVNPRGWKPSASHAYWGIMLIWLFSLLLSIPLLLSYHLTDEPFRNLSLPTDLYSHHVVCVEHWPSKTNQLLYSTSLIMLQYFVPLGFMFICYLKIVICLHKRNSKIDRRRENESRLTENKRINTMLISIVVTFAACWLPLNTFNVIFDWYHEVLMSCHHDLVFAICHLVAMVSTCINPLFYGFLNRNFQKDLVVLIHHCLCFALRERYENIAISTLHTDESKGSLRVAHIPAGI</sequence>
<dbReference type="EMBL" id="D86521">
    <property type="protein sequence ID" value="BAA13104.1"/>
    <property type="molecule type" value="mRNA"/>
</dbReference>
<dbReference type="RefSeq" id="NP_001076242.1">
    <property type="nucleotide sequence ID" value="NM_001082773.1"/>
</dbReference>
<dbReference type="RefSeq" id="XP_008253087.1">
    <property type="nucleotide sequence ID" value="XM_008254865.3"/>
</dbReference>
<dbReference type="RefSeq" id="XP_017196474.1">
    <property type="nucleotide sequence ID" value="XM_017340985.1"/>
</dbReference>
<dbReference type="RefSeq" id="XP_051699248.1">
    <property type="nucleotide sequence ID" value="XM_051843288.2"/>
</dbReference>
<dbReference type="RefSeq" id="XP_069931091.1">
    <property type="nucleotide sequence ID" value="XM_070074990.1"/>
</dbReference>
<dbReference type="RefSeq" id="XP_069931092.1">
    <property type="nucleotide sequence ID" value="XM_070074991.1"/>
</dbReference>
<dbReference type="RefSeq" id="XP_069931093.1">
    <property type="nucleotide sequence ID" value="XM_070074992.1"/>
</dbReference>
<dbReference type="RefSeq" id="XP_069931094.1">
    <property type="nucleotide sequence ID" value="XM_070074993.1"/>
</dbReference>
<dbReference type="RefSeq" id="XP_069931095.1">
    <property type="nucleotide sequence ID" value="XM_070074994.1"/>
</dbReference>
<dbReference type="SMR" id="P79217"/>
<dbReference type="FunCoup" id="P79217">
    <property type="interactions" value="120"/>
</dbReference>
<dbReference type="STRING" id="9986.ENSOCUP00000023630"/>
<dbReference type="GlyCosmos" id="P79217">
    <property type="glycosylation" value="3 sites, No reported glycans"/>
</dbReference>
<dbReference type="PaxDb" id="9986-ENSOCUP00000023630"/>
<dbReference type="Ensembl" id="ENSOCUT00000011236.3">
    <property type="protein sequence ID" value="ENSOCUP00000023630.1"/>
    <property type="gene ID" value="ENSOCUG00000011240.3"/>
</dbReference>
<dbReference type="GeneID" id="100009561"/>
<dbReference type="KEGG" id="ocu:100009561"/>
<dbReference type="CTD" id="4888"/>
<dbReference type="eggNOG" id="KOG3656">
    <property type="taxonomic scope" value="Eukaryota"/>
</dbReference>
<dbReference type="GeneTree" id="ENSGT00940000163511"/>
<dbReference type="HOGENOM" id="CLU_009579_6_1_1"/>
<dbReference type="InParanoid" id="P79217"/>
<dbReference type="OMA" id="ISHAYWG"/>
<dbReference type="OrthoDB" id="9046662at2759"/>
<dbReference type="TreeFam" id="TF315303"/>
<dbReference type="Proteomes" id="UP000001811">
    <property type="component" value="Chromosome 3"/>
</dbReference>
<dbReference type="Bgee" id="ENSOCUG00000011240">
    <property type="expression patterns" value="Expressed in testis"/>
</dbReference>
<dbReference type="GO" id="GO:0043005">
    <property type="term" value="C:neuron projection"/>
    <property type="evidence" value="ECO:0007669"/>
    <property type="project" value="TreeGrafter"/>
</dbReference>
<dbReference type="GO" id="GO:0005886">
    <property type="term" value="C:plasma membrane"/>
    <property type="evidence" value="ECO:0007669"/>
    <property type="project" value="UniProtKB-SubCell"/>
</dbReference>
<dbReference type="GO" id="GO:0042923">
    <property type="term" value="F:neuropeptide binding"/>
    <property type="evidence" value="ECO:0007669"/>
    <property type="project" value="TreeGrafter"/>
</dbReference>
<dbReference type="GO" id="GO:0004983">
    <property type="term" value="F:neuropeptide Y receptor activity"/>
    <property type="evidence" value="ECO:0007669"/>
    <property type="project" value="InterPro"/>
</dbReference>
<dbReference type="CDD" id="cd15396">
    <property type="entry name" value="7tmA_NPY6R"/>
    <property type="match status" value="1"/>
</dbReference>
<dbReference type="FunFam" id="1.20.1070.10:FF:000062">
    <property type="entry name" value="Neuropeptide Y receptor type 1"/>
    <property type="match status" value="1"/>
</dbReference>
<dbReference type="Gene3D" id="1.20.1070.10">
    <property type="entry name" value="Rhodopsin 7-helix transmembrane proteins"/>
    <property type="match status" value="1"/>
</dbReference>
<dbReference type="InterPro" id="IPR000276">
    <property type="entry name" value="GPCR_Rhodpsn"/>
</dbReference>
<dbReference type="InterPro" id="IPR017452">
    <property type="entry name" value="GPCR_Rhodpsn_7TM"/>
</dbReference>
<dbReference type="InterPro" id="IPR000986">
    <property type="entry name" value="NeuroY6_rcpt"/>
</dbReference>
<dbReference type="InterPro" id="IPR000611">
    <property type="entry name" value="NPY_rcpt"/>
</dbReference>
<dbReference type="PANTHER" id="PTHR24235">
    <property type="entry name" value="NEUROPEPTIDE Y RECEPTOR"/>
    <property type="match status" value="1"/>
</dbReference>
<dbReference type="PANTHER" id="PTHR24235:SF16">
    <property type="entry name" value="NEUROPEPTIDE Y RECEPTOR TYPE 6-RELATED"/>
    <property type="match status" value="1"/>
</dbReference>
<dbReference type="Pfam" id="PF00001">
    <property type="entry name" value="7tm_1"/>
    <property type="match status" value="1"/>
</dbReference>
<dbReference type="PRINTS" id="PR00237">
    <property type="entry name" value="GPCRRHODOPSN"/>
</dbReference>
<dbReference type="PRINTS" id="PR01017">
    <property type="entry name" value="NRPEPTIDEY6R"/>
</dbReference>
<dbReference type="PRINTS" id="PR01012">
    <property type="entry name" value="NRPEPTIDEYR"/>
</dbReference>
<dbReference type="SUPFAM" id="SSF81321">
    <property type="entry name" value="Family A G protein-coupled receptor-like"/>
    <property type="match status" value="1"/>
</dbReference>
<dbReference type="PROSITE" id="PS00237">
    <property type="entry name" value="G_PROTEIN_RECEP_F1_1"/>
    <property type="match status" value="1"/>
</dbReference>
<dbReference type="PROSITE" id="PS50262">
    <property type="entry name" value="G_PROTEIN_RECEP_F1_2"/>
    <property type="match status" value="1"/>
</dbReference>
<gene>
    <name type="primary">NPY6R</name>
    <name type="synonym">Y2B</name>
</gene>
<keyword id="KW-1003">Cell membrane</keyword>
<keyword id="KW-1015">Disulfide bond</keyword>
<keyword id="KW-0297">G-protein coupled receptor</keyword>
<keyword id="KW-0325">Glycoprotein</keyword>
<keyword id="KW-0449">Lipoprotein</keyword>
<keyword id="KW-0472">Membrane</keyword>
<keyword id="KW-0564">Palmitate</keyword>
<keyword id="KW-0675">Receptor</keyword>
<keyword id="KW-1185">Reference proteome</keyword>
<keyword id="KW-0807">Transducer</keyword>
<keyword id="KW-0812">Transmembrane</keyword>
<keyword id="KW-1133">Transmembrane helix</keyword>
<evidence type="ECO:0000255" key="1"/>
<evidence type="ECO:0000255" key="2">
    <source>
        <dbReference type="PROSITE-ProRule" id="PRU00521"/>
    </source>
</evidence>
<evidence type="ECO:0000269" key="3">
    <source>
    </source>
</evidence>
<organism>
    <name type="scientific">Oryctolagus cuniculus</name>
    <name type="common">Rabbit</name>
    <dbReference type="NCBI Taxonomy" id="9986"/>
    <lineage>
        <taxon>Eukaryota</taxon>
        <taxon>Metazoa</taxon>
        <taxon>Chordata</taxon>
        <taxon>Craniata</taxon>
        <taxon>Vertebrata</taxon>
        <taxon>Euteleostomi</taxon>
        <taxon>Mammalia</taxon>
        <taxon>Eutheria</taxon>
        <taxon>Euarchontoglires</taxon>
        <taxon>Glires</taxon>
        <taxon>Lagomorpha</taxon>
        <taxon>Leporidae</taxon>
        <taxon>Oryctolagus</taxon>
    </lineage>
</organism>
<proteinExistence type="evidence at transcript level"/>
<reference key="1">
    <citation type="journal article" date="1996" name="J. Biol. Chem.">
        <title>Inactivation of a novel neuropeptide Y/peptide YY receptor gene in primate species.</title>
        <authorList>
            <person name="Matsumoto M."/>
            <person name="Nomura T."/>
            <person name="Momose K."/>
            <person name="Ikeda Y."/>
            <person name="Kondou Y."/>
            <person name="Akiho H."/>
            <person name="Togami J."/>
            <person name="Kimura Y."/>
            <person name="Okada M."/>
            <person name="Yamaguchi T."/>
        </authorList>
    </citation>
    <scope>NUCLEOTIDE SEQUENCE [MRNA]</scope>
    <scope>FUNCTION</scope>
    <scope>TISSUE SPECIFICITY</scope>
    <source>
        <strain>Japanese white</strain>
        <tissue>Skeletal muscle</tissue>
    </source>
</reference>